<name>SNTA1_BOVIN</name>
<protein>
    <recommendedName>
        <fullName>Alpha-1-syntrophin</fullName>
    </recommendedName>
</protein>
<accession>Q0P5E6</accession>
<organism>
    <name type="scientific">Bos taurus</name>
    <name type="common">Bovine</name>
    <dbReference type="NCBI Taxonomy" id="9913"/>
    <lineage>
        <taxon>Eukaryota</taxon>
        <taxon>Metazoa</taxon>
        <taxon>Chordata</taxon>
        <taxon>Craniata</taxon>
        <taxon>Vertebrata</taxon>
        <taxon>Euteleostomi</taxon>
        <taxon>Mammalia</taxon>
        <taxon>Eutheria</taxon>
        <taxon>Laurasiatheria</taxon>
        <taxon>Artiodactyla</taxon>
        <taxon>Ruminantia</taxon>
        <taxon>Pecora</taxon>
        <taxon>Bovidae</taxon>
        <taxon>Bovinae</taxon>
        <taxon>Bos</taxon>
    </lineage>
</organism>
<evidence type="ECO:0000250" key="1"/>
<evidence type="ECO:0000250" key="2">
    <source>
        <dbReference type="UniProtKB" id="Q13424"/>
    </source>
</evidence>
<evidence type="ECO:0000250" key="3">
    <source>
        <dbReference type="UniProtKB" id="Q61234"/>
    </source>
</evidence>
<evidence type="ECO:0000255" key="4">
    <source>
        <dbReference type="PROSITE-ProRule" id="PRU00143"/>
    </source>
</evidence>
<evidence type="ECO:0000255" key="5">
    <source>
        <dbReference type="PROSITE-ProRule" id="PRU00145"/>
    </source>
</evidence>
<evidence type="ECO:0000256" key="6">
    <source>
        <dbReference type="SAM" id="MobiDB-lite"/>
    </source>
</evidence>
<evidence type="ECO:0000305" key="7"/>
<feature type="chain" id="PRO_0000295662" description="Alpha-1-syntrophin">
    <location>
        <begin position="1"/>
        <end position="505"/>
    </location>
</feature>
<feature type="domain" description="PH 1" evidence="5">
    <location>
        <begin position="6"/>
        <end position="269"/>
    </location>
</feature>
<feature type="domain" description="PDZ" evidence="4">
    <location>
        <begin position="87"/>
        <end position="170"/>
    </location>
</feature>
<feature type="domain" description="PH 2" evidence="5">
    <location>
        <begin position="293"/>
        <end position="401"/>
    </location>
</feature>
<feature type="domain" description="SU">
    <location>
        <begin position="449"/>
        <end position="505"/>
    </location>
</feature>
<feature type="region of interest" description="Disordered" evidence="6">
    <location>
        <begin position="1"/>
        <end position="77"/>
    </location>
</feature>
<feature type="region of interest" description="Disordered" evidence="6">
    <location>
        <begin position="180"/>
        <end position="211"/>
    </location>
</feature>
<feature type="region of interest" description="Calmodulin-binding" evidence="1">
    <location>
        <begin position="483"/>
        <end position="505"/>
    </location>
</feature>
<feature type="modified residue" description="Phosphoserine" evidence="3">
    <location>
        <position position="101"/>
    </location>
</feature>
<feature type="modified residue" description="Phosphoserine" evidence="2">
    <location>
        <position position="184"/>
    </location>
</feature>
<feature type="modified residue" description="Phosphoserine" evidence="2">
    <location>
        <position position="189"/>
    </location>
</feature>
<feature type="modified residue" description="Phosphoserine" evidence="2">
    <location>
        <position position="193"/>
    </location>
</feature>
<feature type="modified residue" description="Phosphoserine" evidence="3">
    <location>
        <position position="200"/>
    </location>
</feature>
<comment type="function">
    <text evidence="1">Adapter protein that binds to and probably organizes the subcellular localization of a variety of membrane proteins. May link various receptors to the actin cytoskeleton and the extracellular matrix via the dystrophin glycoprotein complex. Plays an important role in synapse formation and in the organization of UTRN and acetylcholine receptors at the neuromuscular synapse. Binds to phosphatidylinositol 4,5-bisphosphate (By similarity).</text>
</comment>
<comment type="subunit">
    <text evidence="1 3">Monomer and homodimer. Interacts with the dystrophin related protein DTNA; SGCG of the dystrophin glycoprotein complex; NOS1; GRB2; GA; TGFA; MAPK12 and the sodium channel proteins SCN4A and SCN5A. Interacts with the dystrophin protein DMD in a calmodulin dependent manner and with related protein UTRN; SGCA of the dystrophin glycoprotein complex; F-actin; calmodulin and with the other members of the syntrophin family SNTB1 and SNTB2. Interacts with MYOC; regulates muscle hypertrophy (By similarity). Interacts with DTNB (By similarity).</text>
</comment>
<comment type="subcellular location">
    <subcellularLocation>
        <location evidence="1">Cell membrane</location>
        <location evidence="1">Sarcolemma</location>
        <topology evidence="1">Peripheral membrane protein</topology>
        <orientation evidence="1">Cytoplasmic side</orientation>
    </subcellularLocation>
    <subcellularLocation>
        <location evidence="1">Cell junction</location>
    </subcellularLocation>
    <subcellularLocation>
        <location evidence="1">Cytoplasm</location>
        <location evidence="1">Cytoskeleton</location>
    </subcellularLocation>
    <text evidence="1">In skeletal muscle, it localizes at the cytoplasmic side of the sarcolemmal membrane and at neuromuscular junctions.</text>
</comment>
<comment type="domain">
    <text evidence="1">The PH 1 domain mediates the oligomerization in a calcium dependent manner, and the association with the phosphatidylinositol 4,5-bisphosphate.</text>
</comment>
<comment type="domain">
    <text evidence="1">The PDZ domain binds to the last three or four amino acids of ion channels and receptor proteins. The association with dystrophin or related proteins probably leaves the PDZ domain available to recruit proteins to the membrane (By similarity).</text>
</comment>
<comment type="domain">
    <text evidence="1">The SU domain binds calmodulin in a calcium-dependent manner (By similarity). It contains actin-binding sites.</text>
</comment>
<comment type="PTM">
    <text evidence="1">Phosphorylated by CaM-kinase II. Phosphorylation may inhibit the interaction with DMD (By similarity).</text>
</comment>
<comment type="similarity">
    <text evidence="7">Belongs to the syntrophin family.</text>
</comment>
<proteinExistence type="evidence at transcript level"/>
<sequence>MASGRRAPRTGLLELRAGAGSGAGGERWQRAVLSLEEDALTVSPADGEPGPEPGAQREPEPAQLNGAAEPGAASPPLPEALLLQPRRVTVRKADAGGLGISIKGGRENKMPILISKIFKGLAADQTEALFVGDAILSVNGEDLSSATHDEAVQVLKKTGKEVVLEVKYMKEVSPYFKNSASGTSVGWDSPPASPLQRQPSSPGPPPRDLRDAKHMSLKMAYVSRRCTPTDPETRYLEICSADGRDTLFLRAKDEASAKSWAAAIQAQVNTLTPRVKDELQALLSATSTAGSQDIKRIGWLTEQLPSGGTAPTLALLTEKELLLYSCLPQTREALSRPARTAPLITTRLVHSGPSKGSVPYDAELSFALRTGTRHGVDTHLFSVESPQELAAWTRQLVDGCHRAAEGVQEVSTACTWNGRACSLSVHIDNGFTLWAAEPGAARAVLLRQPFEKLQMSSDDGASLLFLDFGGAEGEIQLDLHSCPKTMVFIIHSFLSAKVTRLGLLA</sequence>
<dbReference type="EMBL" id="BC120146">
    <property type="protein sequence ID" value="AAI20147.1"/>
    <property type="molecule type" value="mRNA"/>
</dbReference>
<dbReference type="RefSeq" id="NP_001069366.1">
    <property type="nucleotide sequence ID" value="NM_001075898.2"/>
</dbReference>
<dbReference type="BMRB" id="Q0P5E6"/>
<dbReference type="SMR" id="Q0P5E6"/>
<dbReference type="FunCoup" id="Q0P5E6">
    <property type="interactions" value="281"/>
</dbReference>
<dbReference type="STRING" id="9913.ENSBTAP00000000662"/>
<dbReference type="PaxDb" id="9913-ENSBTAP00000000662"/>
<dbReference type="GeneID" id="527488"/>
<dbReference type="KEGG" id="bta:527488"/>
<dbReference type="CTD" id="6640"/>
<dbReference type="VEuPathDB" id="HostDB:ENSBTAG00000000512"/>
<dbReference type="eggNOG" id="KOG3551">
    <property type="taxonomic scope" value="Eukaryota"/>
</dbReference>
<dbReference type="HOGENOM" id="CLU_026406_3_1_1"/>
<dbReference type="InParanoid" id="Q0P5E6"/>
<dbReference type="OMA" id="DLRCCPK"/>
<dbReference type="OrthoDB" id="409749at2759"/>
<dbReference type="TreeFam" id="TF317932"/>
<dbReference type="Reactome" id="R-BTA-9913351">
    <property type="pathway name" value="Formation of the dystrophin-glycoprotein complex (DGC)"/>
</dbReference>
<dbReference type="Proteomes" id="UP000009136">
    <property type="component" value="Chromosome 13"/>
</dbReference>
<dbReference type="Bgee" id="ENSBTAG00000000512">
    <property type="expression patterns" value="Expressed in choroid plexus and 99 other cell types or tissues"/>
</dbReference>
<dbReference type="GO" id="GO:0070161">
    <property type="term" value="C:anchoring junction"/>
    <property type="evidence" value="ECO:0007669"/>
    <property type="project" value="UniProtKB-SubCell"/>
</dbReference>
<dbReference type="GO" id="GO:0005737">
    <property type="term" value="C:cytoplasm"/>
    <property type="evidence" value="ECO:0007669"/>
    <property type="project" value="UniProtKB-KW"/>
</dbReference>
<dbReference type="GO" id="GO:0005856">
    <property type="term" value="C:cytoskeleton"/>
    <property type="evidence" value="ECO:0007669"/>
    <property type="project" value="UniProtKB-SubCell"/>
</dbReference>
<dbReference type="GO" id="GO:0016010">
    <property type="term" value="C:dystrophin-associated glycoprotein complex"/>
    <property type="evidence" value="ECO:0000318"/>
    <property type="project" value="GO_Central"/>
</dbReference>
<dbReference type="GO" id="GO:0031594">
    <property type="term" value="C:neuromuscular junction"/>
    <property type="evidence" value="ECO:0000318"/>
    <property type="project" value="GO_Central"/>
</dbReference>
<dbReference type="GO" id="GO:0042383">
    <property type="term" value="C:sarcolemma"/>
    <property type="evidence" value="ECO:0000318"/>
    <property type="project" value="GO_Central"/>
</dbReference>
<dbReference type="GO" id="GO:0003779">
    <property type="term" value="F:actin binding"/>
    <property type="evidence" value="ECO:0007669"/>
    <property type="project" value="UniProtKB-KW"/>
</dbReference>
<dbReference type="GO" id="GO:0005516">
    <property type="term" value="F:calmodulin binding"/>
    <property type="evidence" value="ECO:0007669"/>
    <property type="project" value="UniProtKB-KW"/>
</dbReference>
<dbReference type="GO" id="GO:0017080">
    <property type="term" value="F:sodium channel regulator activity"/>
    <property type="evidence" value="ECO:0000318"/>
    <property type="project" value="GO_Central"/>
</dbReference>
<dbReference type="GO" id="GO:0005198">
    <property type="term" value="F:structural molecule activity"/>
    <property type="evidence" value="ECO:0007669"/>
    <property type="project" value="InterPro"/>
</dbReference>
<dbReference type="GO" id="GO:0044325">
    <property type="term" value="F:transmembrane transporter binding"/>
    <property type="evidence" value="ECO:0000318"/>
    <property type="project" value="GO_Central"/>
</dbReference>
<dbReference type="GO" id="GO:0086005">
    <property type="term" value="P:ventricular cardiac muscle cell action potential"/>
    <property type="evidence" value="ECO:0000318"/>
    <property type="project" value="GO_Central"/>
</dbReference>
<dbReference type="CDD" id="cd06801">
    <property type="entry name" value="PDZ_syntrophin-like"/>
    <property type="match status" value="1"/>
</dbReference>
<dbReference type="CDD" id="cd01258">
    <property type="entry name" value="PHsplit_syntrophin"/>
    <property type="match status" value="1"/>
</dbReference>
<dbReference type="FunFam" id="2.30.29.30:FF:000360">
    <property type="entry name" value="Alpha-1-syntrophin"/>
    <property type="match status" value="1"/>
</dbReference>
<dbReference type="FunFam" id="2.30.29.30:FF:000329">
    <property type="entry name" value="alpha-1-syntrophin"/>
    <property type="match status" value="1"/>
</dbReference>
<dbReference type="FunFam" id="2.30.42.10:FF:000052">
    <property type="entry name" value="Syntrophin beta 1"/>
    <property type="match status" value="1"/>
</dbReference>
<dbReference type="Gene3D" id="2.30.42.10">
    <property type="match status" value="1"/>
</dbReference>
<dbReference type="Gene3D" id="2.30.29.30">
    <property type="entry name" value="Pleckstrin-homology domain (PH domain)/Phosphotyrosine-binding domain (PTB)"/>
    <property type="match status" value="2"/>
</dbReference>
<dbReference type="InterPro" id="IPR001478">
    <property type="entry name" value="PDZ"/>
</dbReference>
<dbReference type="InterPro" id="IPR036034">
    <property type="entry name" value="PDZ_sf"/>
</dbReference>
<dbReference type="InterPro" id="IPR011993">
    <property type="entry name" value="PH-like_dom_sf"/>
</dbReference>
<dbReference type="InterPro" id="IPR001849">
    <property type="entry name" value="PH_domain"/>
</dbReference>
<dbReference type="InterPro" id="IPR041428">
    <property type="entry name" value="PHsplit_syntrophin"/>
</dbReference>
<dbReference type="InterPro" id="IPR015482">
    <property type="entry name" value="Syntrophin"/>
</dbReference>
<dbReference type="InterPro" id="IPR055108">
    <property type="entry name" value="Syntrophin_4th"/>
</dbReference>
<dbReference type="PANTHER" id="PTHR10554:SF6">
    <property type="entry name" value="ALPHA-1-SYNTROPHIN"/>
    <property type="match status" value="1"/>
</dbReference>
<dbReference type="PANTHER" id="PTHR10554">
    <property type="entry name" value="SYNTROPHIN"/>
    <property type="match status" value="1"/>
</dbReference>
<dbReference type="Pfam" id="PF00595">
    <property type="entry name" value="PDZ"/>
    <property type="match status" value="1"/>
</dbReference>
<dbReference type="Pfam" id="PF00169">
    <property type="entry name" value="PH"/>
    <property type="match status" value="1"/>
</dbReference>
<dbReference type="Pfam" id="PF18012">
    <property type="entry name" value="PH_17"/>
    <property type="match status" value="1"/>
</dbReference>
<dbReference type="Pfam" id="PF23012">
    <property type="entry name" value="Syntrophin_4th"/>
    <property type="match status" value="1"/>
</dbReference>
<dbReference type="SMART" id="SM00228">
    <property type="entry name" value="PDZ"/>
    <property type="match status" value="1"/>
</dbReference>
<dbReference type="SMART" id="SM00233">
    <property type="entry name" value="PH"/>
    <property type="match status" value="2"/>
</dbReference>
<dbReference type="SUPFAM" id="SSF50156">
    <property type="entry name" value="PDZ domain-like"/>
    <property type="match status" value="1"/>
</dbReference>
<dbReference type="SUPFAM" id="SSF50729">
    <property type="entry name" value="PH domain-like"/>
    <property type="match status" value="1"/>
</dbReference>
<dbReference type="PROSITE" id="PS50106">
    <property type="entry name" value="PDZ"/>
    <property type="match status" value="1"/>
</dbReference>
<dbReference type="PROSITE" id="PS50003">
    <property type="entry name" value="PH_DOMAIN"/>
    <property type="match status" value="2"/>
</dbReference>
<keyword id="KW-0009">Actin-binding</keyword>
<keyword id="KW-0106">Calcium</keyword>
<keyword id="KW-0112">Calmodulin-binding</keyword>
<keyword id="KW-0965">Cell junction</keyword>
<keyword id="KW-1003">Cell membrane</keyword>
<keyword id="KW-0963">Cytoplasm</keyword>
<keyword id="KW-0206">Cytoskeleton</keyword>
<keyword id="KW-0472">Membrane</keyword>
<keyword id="KW-0597">Phosphoprotein</keyword>
<keyword id="KW-1185">Reference proteome</keyword>
<keyword id="KW-0677">Repeat</keyword>
<reference key="1">
    <citation type="submission" date="2006-08" db="EMBL/GenBank/DDBJ databases">
        <authorList>
            <consortium name="NIH - Mammalian Gene Collection (MGC) project"/>
        </authorList>
    </citation>
    <scope>NUCLEOTIDE SEQUENCE [LARGE SCALE MRNA]</scope>
    <source>
        <strain>Hereford</strain>
        <tissue>Fetal medulla</tissue>
    </source>
</reference>
<gene>
    <name type="primary">SNTA1</name>
</gene>